<protein>
    <recommendedName>
        <fullName evidence="1">Glutamyl-tRNA reductase</fullName>
        <shortName evidence="1">GluTR</shortName>
        <ecNumber evidence="1">1.2.1.70</ecNumber>
    </recommendedName>
</protein>
<accession>O84669</accession>
<proteinExistence type="inferred from homology"/>
<comment type="function">
    <text evidence="1">Catalyzes the NADPH-dependent reduction of glutamyl-tRNA(Glu) to glutamate 1-semialdehyde (GSA).</text>
</comment>
<comment type="catalytic activity">
    <reaction evidence="1">
        <text>(S)-4-amino-5-oxopentanoate + tRNA(Glu) + NADP(+) = L-glutamyl-tRNA(Glu) + NADPH + H(+)</text>
        <dbReference type="Rhea" id="RHEA:12344"/>
        <dbReference type="Rhea" id="RHEA-COMP:9663"/>
        <dbReference type="Rhea" id="RHEA-COMP:9680"/>
        <dbReference type="ChEBI" id="CHEBI:15378"/>
        <dbReference type="ChEBI" id="CHEBI:57501"/>
        <dbReference type="ChEBI" id="CHEBI:57783"/>
        <dbReference type="ChEBI" id="CHEBI:58349"/>
        <dbReference type="ChEBI" id="CHEBI:78442"/>
        <dbReference type="ChEBI" id="CHEBI:78520"/>
        <dbReference type="EC" id="1.2.1.70"/>
    </reaction>
</comment>
<comment type="pathway">
    <text evidence="1">Porphyrin-containing compound metabolism; protoporphyrin-IX biosynthesis; 5-aminolevulinate from L-glutamyl-tRNA(Glu): step 1/2.</text>
</comment>
<comment type="subunit">
    <text evidence="1">Homodimer.</text>
</comment>
<comment type="domain">
    <text evidence="1">Possesses an unusual extended V-shaped dimeric structure with each monomer consisting of three distinct domains arranged along a curved 'spinal' alpha-helix. The N-terminal catalytic domain specifically recognizes the glutamate moiety of the substrate. The second domain is the NADPH-binding domain, and the third C-terminal domain is responsible for dimerization.</text>
</comment>
<comment type="miscellaneous">
    <text evidence="1">During catalysis, the active site Cys acts as a nucleophile attacking the alpha-carbonyl group of tRNA-bound glutamate with the formation of a thioester intermediate between enzyme and glutamate, and the concomitant release of tRNA(Glu). The thioester intermediate is finally reduced by direct hydride transfer from NADPH, to form the product GSA.</text>
</comment>
<comment type="similarity">
    <text evidence="1">Belongs to the glutamyl-tRNA reductase family.</text>
</comment>
<evidence type="ECO:0000255" key="1">
    <source>
        <dbReference type="HAMAP-Rule" id="MF_00087"/>
    </source>
</evidence>
<name>HEM1_CHLTR</name>
<sequence length="335" mass="38855">MVREGEERIGNRVSLGVIGVSYRETTLQQREQVLHILQQAQGSFRPEVFQEERDYVLLATCHRVELYSVAPAELFDSLAQEIELLGVSPYFYRNQDCFAHLFCVAGGLDSLVLGETEIQGQVKRAYLQAAREQKLSFALHFLFQKALKEGKVFRAKGGAPYAEITIPILVDQELRRRQIDKKASLLFIGYSEINRSVAYHLQRQGFSCITFCSRQQLPTLSMRQVVREELCFQDPYRVVFLGSSELQYALPHSLWESIWDIPDRIVFDFAVPRALPSHTVFPHRYVDMDQISDWLREHRKEVNSAHLHSLREVAYRYWNSLNQRLERRDCVGANA</sequence>
<organism>
    <name type="scientific">Chlamydia trachomatis serovar D (strain ATCC VR-885 / DSM 19411 / UW-3/Cx)</name>
    <dbReference type="NCBI Taxonomy" id="272561"/>
    <lineage>
        <taxon>Bacteria</taxon>
        <taxon>Pseudomonadati</taxon>
        <taxon>Chlamydiota</taxon>
        <taxon>Chlamydiia</taxon>
        <taxon>Chlamydiales</taxon>
        <taxon>Chlamydiaceae</taxon>
        <taxon>Chlamydia/Chlamydophila group</taxon>
        <taxon>Chlamydia</taxon>
    </lineage>
</organism>
<dbReference type="EC" id="1.2.1.70" evidence="1"/>
<dbReference type="EMBL" id="AE001273">
    <property type="protein sequence ID" value="AAC68257.2"/>
    <property type="molecule type" value="Genomic_DNA"/>
</dbReference>
<dbReference type="PIR" id="H71487">
    <property type="entry name" value="H71487"/>
</dbReference>
<dbReference type="RefSeq" id="NP_220181.1">
    <property type="nucleotide sequence ID" value="NC_000117.1"/>
</dbReference>
<dbReference type="RefSeq" id="WP_010725294.1">
    <property type="nucleotide sequence ID" value="NC_000117.1"/>
</dbReference>
<dbReference type="SMR" id="O84669"/>
<dbReference type="STRING" id="272561.CT_662"/>
<dbReference type="EnsemblBacteria" id="AAC68257">
    <property type="protein sequence ID" value="AAC68257"/>
    <property type="gene ID" value="CT_662"/>
</dbReference>
<dbReference type="GeneID" id="884447"/>
<dbReference type="KEGG" id="ctr:CT_662"/>
<dbReference type="PATRIC" id="fig|272561.5.peg.728"/>
<dbReference type="HOGENOM" id="CLU_035113_3_1_0"/>
<dbReference type="InParanoid" id="O84669"/>
<dbReference type="OrthoDB" id="110209at2"/>
<dbReference type="UniPathway" id="UPA00251">
    <property type="reaction ID" value="UER00316"/>
</dbReference>
<dbReference type="Proteomes" id="UP000000431">
    <property type="component" value="Chromosome"/>
</dbReference>
<dbReference type="GO" id="GO:0008883">
    <property type="term" value="F:glutamyl-tRNA reductase activity"/>
    <property type="evidence" value="ECO:0007669"/>
    <property type="project" value="UniProtKB-UniRule"/>
</dbReference>
<dbReference type="GO" id="GO:0050661">
    <property type="term" value="F:NADP binding"/>
    <property type="evidence" value="ECO:0007669"/>
    <property type="project" value="InterPro"/>
</dbReference>
<dbReference type="GO" id="GO:0006782">
    <property type="term" value="P:protoporphyrinogen IX biosynthetic process"/>
    <property type="evidence" value="ECO:0007669"/>
    <property type="project" value="UniProtKB-UniRule"/>
</dbReference>
<dbReference type="Gene3D" id="3.30.460.30">
    <property type="entry name" value="Glutamyl-tRNA reductase, N-terminal domain"/>
    <property type="match status" value="1"/>
</dbReference>
<dbReference type="HAMAP" id="MF_00087">
    <property type="entry name" value="Glu_tRNA_reductase"/>
    <property type="match status" value="1"/>
</dbReference>
<dbReference type="InterPro" id="IPR000343">
    <property type="entry name" value="4pyrrol_synth_GluRdtase"/>
</dbReference>
<dbReference type="InterPro" id="IPR015895">
    <property type="entry name" value="4pyrrol_synth_GluRdtase_N"/>
</dbReference>
<dbReference type="InterPro" id="IPR018214">
    <property type="entry name" value="GluRdtase_CS"/>
</dbReference>
<dbReference type="InterPro" id="IPR036343">
    <property type="entry name" value="GluRdtase_N_sf"/>
</dbReference>
<dbReference type="NCBIfam" id="NF001909">
    <property type="entry name" value="PRK00676.1"/>
    <property type="match status" value="1"/>
</dbReference>
<dbReference type="PANTHER" id="PTHR43120">
    <property type="entry name" value="GLUTAMYL-TRNA REDUCTASE 1, CHLOROPLASTIC"/>
    <property type="match status" value="1"/>
</dbReference>
<dbReference type="PANTHER" id="PTHR43120:SF1">
    <property type="entry name" value="GLUTAMYL-TRNA REDUCTASE 1, CHLOROPLASTIC"/>
    <property type="match status" value="1"/>
</dbReference>
<dbReference type="Pfam" id="PF05201">
    <property type="entry name" value="GlutR_N"/>
    <property type="match status" value="1"/>
</dbReference>
<dbReference type="SUPFAM" id="SSF69742">
    <property type="entry name" value="Glutamyl tRNA-reductase catalytic, N-terminal domain"/>
    <property type="match status" value="1"/>
</dbReference>
<dbReference type="PROSITE" id="PS00747">
    <property type="entry name" value="GLUTR"/>
    <property type="match status" value="1"/>
</dbReference>
<feature type="chain" id="PRO_0000114008" description="Glutamyl-tRNA reductase">
    <location>
        <begin position="1"/>
        <end position="335"/>
    </location>
</feature>
<feature type="active site" description="Nucleophile" evidence="1">
    <location>
        <position position="61"/>
    </location>
</feature>
<feature type="binding site" evidence="1">
    <location>
        <begin position="60"/>
        <end position="63"/>
    </location>
    <ligand>
        <name>substrate</name>
    </ligand>
</feature>
<feature type="binding site" evidence="1">
    <location>
        <position position="110"/>
    </location>
    <ligand>
        <name>substrate</name>
    </ligand>
</feature>
<feature type="binding site" evidence="1">
    <location>
        <begin position="115"/>
        <end position="117"/>
    </location>
    <ligand>
        <name>substrate</name>
    </ligand>
</feature>
<feature type="binding site" evidence="1">
    <location>
        <position position="121"/>
    </location>
    <ligand>
        <name>substrate</name>
    </ligand>
</feature>
<feature type="binding site" evidence="1">
    <location>
        <begin position="189"/>
        <end position="194"/>
    </location>
    <ligand>
        <name>NADP(+)</name>
        <dbReference type="ChEBI" id="CHEBI:58349"/>
    </ligand>
</feature>
<feature type="site" description="Important for activity" evidence="1">
    <location>
        <position position="100"/>
    </location>
</feature>
<keyword id="KW-0521">NADP</keyword>
<keyword id="KW-0560">Oxidoreductase</keyword>
<keyword id="KW-0627">Porphyrin biosynthesis</keyword>
<keyword id="KW-1185">Reference proteome</keyword>
<reference key="1">
    <citation type="journal article" date="1998" name="Science">
        <title>Genome sequence of an obligate intracellular pathogen of humans: Chlamydia trachomatis.</title>
        <authorList>
            <person name="Stephens R.S."/>
            <person name="Kalman S."/>
            <person name="Lammel C.J."/>
            <person name="Fan J."/>
            <person name="Marathe R."/>
            <person name="Aravind L."/>
            <person name="Mitchell W.P."/>
            <person name="Olinger L."/>
            <person name="Tatusov R.L."/>
            <person name="Zhao Q."/>
            <person name="Koonin E.V."/>
            <person name="Davis R.W."/>
        </authorList>
    </citation>
    <scope>NUCLEOTIDE SEQUENCE [LARGE SCALE GENOMIC DNA]</scope>
    <source>
        <strain>ATCC VR-885 / DSM 19411 / UW-3/Cx</strain>
    </source>
</reference>
<gene>
    <name evidence="1" type="primary">hemA</name>
    <name type="ordered locus">CT_662</name>
</gene>